<organism>
    <name type="scientific">Mycobacterium ulcerans (strain Agy99)</name>
    <dbReference type="NCBI Taxonomy" id="362242"/>
    <lineage>
        <taxon>Bacteria</taxon>
        <taxon>Bacillati</taxon>
        <taxon>Actinomycetota</taxon>
        <taxon>Actinomycetes</taxon>
        <taxon>Mycobacteriales</taxon>
        <taxon>Mycobacteriaceae</taxon>
        <taxon>Mycobacterium</taxon>
        <taxon>Mycobacterium ulcerans group</taxon>
    </lineage>
</organism>
<dbReference type="EMBL" id="CP000325">
    <property type="protein sequence ID" value="ABL03435.1"/>
    <property type="molecule type" value="Genomic_DNA"/>
</dbReference>
<dbReference type="RefSeq" id="WP_011739060.1">
    <property type="nucleotide sequence ID" value="NC_008611.1"/>
</dbReference>
<dbReference type="SMR" id="A0PM66"/>
<dbReference type="KEGG" id="mul:MUL_0793"/>
<dbReference type="eggNOG" id="COG0090">
    <property type="taxonomic scope" value="Bacteria"/>
</dbReference>
<dbReference type="HOGENOM" id="CLU_036235_2_1_11"/>
<dbReference type="Proteomes" id="UP000000765">
    <property type="component" value="Chromosome"/>
</dbReference>
<dbReference type="GO" id="GO:0015934">
    <property type="term" value="C:large ribosomal subunit"/>
    <property type="evidence" value="ECO:0007669"/>
    <property type="project" value="InterPro"/>
</dbReference>
<dbReference type="GO" id="GO:0019843">
    <property type="term" value="F:rRNA binding"/>
    <property type="evidence" value="ECO:0007669"/>
    <property type="project" value="UniProtKB-UniRule"/>
</dbReference>
<dbReference type="GO" id="GO:0003735">
    <property type="term" value="F:structural constituent of ribosome"/>
    <property type="evidence" value="ECO:0007669"/>
    <property type="project" value="InterPro"/>
</dbReference>
<dbReference type="GO" id="GO:0016740">
    <property type="term" value="F:transferase activity"/>
    <property type="evidence" value="ECO:0007669"/>
    <property type="project" value="InterPro"/>
</dbReference>
<dbReference type="GO" id="GO:0002181">
    <property type="term" value="P:cytoplasmic translation"/>
    <property type="evidence" value="ECO:0007669"/>
    <property type="project" value="TreeGrafter"/>
</dbReference>
<dbReference type="FunFam" id="2.30.30.30:FF:000001">
    <property type="entry name" value="50S ribosomal protein L2"/>
    <property type="match status" value="1"/>
</dbReference>
<dbReference type="FunFam" id="2.40.50.140:FF:000003">
    <property type="entry name" value="50S ribosomal protein L2"/>
    <property type="match status" value="1"/>
</dbReference>
<dbReference type="FunFam" id="4.10.950.10:FF:000001">
    <property type="entry name" value="50S ribosomal protein L2"/>
    <property type="match status" value="1"/>
</dbReference>
<dbReference type="Gene3D" id="2.30.30.30">
    <property type="match status" value="1"/>
</dbReference>
<dbReference type="Gene3D" id="2.40.50.140">
    <property type="entry name" value="Nucleic acid-binding proteins"/>
    <property type="match status" value="1"/>
</dbReference>
<dbReference type="Gene3D" id="4.10.950.10">
    <property type="entry name" value="Ribosomal protein L2, domain 3"/>
    <property type="match status" value="1"/>
</dbReference>
<dbReference type="HAMAP" id="MF_01320_B">
    <property type="entry name" value="Ribosomal_uL2_B"/>
    <property type="match status" value="1"/>
</dbReference>
<dbReference type="InterPro" id="IPR012340">
    <property type="entry name" value="NA-bd_OB-fold"/>
</dbReference>
<dbReference type="InterPro" id="IPR014722">
    <property type="entry name" value="Rib_uL2_dom2"/>
</dbReference>
<dbReference type="InterPro" id="IPR002171">
    <property type="entry name" value="Ribosomal_uL2"/>
</dbReference>
<dbReference type="InterPro" id="IPR005880">
    <property type="entry name" value="Ribosomal_uL2_bac/org-type"/>
</dbReference>
<dbReference type="InterPro" id="IPR022669">
    <property type="entry name" value="Ribosomal_uL2_C"/>
</dbReference>
<dbReference type="InterPro" id="IPR022671">
    <property type="entry name" value="Ribosomal_uL2_CS"/>
</dbReference>
<dbReference type="InterPro" id="IPR014726">
    <property type="entry name" value="Ribosomal_uL2_dom3"/>
</dbReference>
<dbReference type="InterPro" id="IPR022666">
    <property type="entry name" value="Ribosomal_uL2_RNA-bd_dom"/>
</dbReference>
<dbReference type="InterPro" id="IPR008991">
    <property type="entry name" value="Translation_prot_SH3-like_sf"/>
</dbReference>
<dbReference type="NCBIfam" id="TIGR01171">
    <property type="entry name" value="rplB_bact"/>
    <property type="match status" value="1"/>
</dbReference>
<dbReference type="PANTHER" id="PTHR13691:SF5">
    <property type="entry name" value="LARGE RIBOSOMAL SUBUNIT PROTEIN UL2M"/>
    <property type="match status" value="1"/>
</dbReference>
<dbReference type="PANTHER" id="PTHR13691">
    <property type="entry name" value="RIBOSOMAL PROTEIN L2"/>
    <property type="match status" value="1"/>
</dbReference>
<dbReference type="Pfam" id="PF00181">
    <property type="entry name" value="Ribosomal_L2"/>
    <property type="match status" value="1"/>
</dbReference>
<dbReference type="Pfam" id="PF03947">
    <property type="entry name" value="Ribosomal_L2_C"/>
    <property type="match status" value="1"/>
</dbReference>
<dbReference type="PIRSF" id="PIRSF002158">
    <property type="entry name" value="Ribosomal_L2"/>
    <property type="match status" value="1"/>
</dbReference>
<dbReference type="SMART" id="SM01383">
    <property type="entry name" value="Ribosomal_L2"/>
    <property type="match status" value="1"/>
</dbReference>
<dbReference type="SMART" id="SM01382">
    <property type="entry name" value="Ribosomal_L2_C"/>
    <property type="match status" value="1"/>
</dbReference>
<dbReference type="SUPFAM" id="SSF50249">
    <property type="entry name" value="Nucleic acid-binding proteins"/>
    <property type="match status" value="1"/>
</dbReference>
<dbReference type="SUPFAM" id="SSF50104">
    <property type="entry name" value="Translation proteins SH3-like domain"/>
    <property type="match status" value="1"/>
</dbReference>
<dbReference type="PROSITE" id="PS00467">
    <property type="entry name" value="RIBOSOMAL_L2"/>
    <property type="match status" value="1"/>
</dbReference>
<reference key="1">
    <citation type="journal article" date="2007" name="Genome Res.">
        <title>Reductive evolution and niche adaptation inferred from the genome of Mycobacterium ulcerans, the causative agent of Buruli ulcer.</title>
        <authorList>
            <person name="Stinear T.P."/>
            <person name="Seemann T."/>
            <person name="Pidot S."/>
            <person name="Frigui W."/>
            <person name="Reysset G."/>
            <person name="Garnier T."/>
            <person name="Meurice G."/>
            <person name="Simon D."/>
            <person name="Bouchier C."/>
            <person name="Ma L."/>
            <person name="Tichit M."/>
            <person name="Porter J.L."/>
            <person name="Ryan J."/>
            <person name="Johnson P.D.R."/>
            <person name="Davies J.K."/>
            <person name="Jenkin G.A."/>
            <person name="Small P.L.C."/>
            <person name="Jones L.M."/>
            <person name="Tekaia F."/>
            <person name="Laval F."/>
            <person name="Daffe M."/>
            <person name="Parkhill J."/>
            <person name="Cole S.T."/>
        </authorList>
    </citation>
    <scope>NUCLEOTIDE SEQUENCE [LARGE SCALE GENOMIC DNA]</scope>
    <source>
        <strain>Agy99</strain>
    </source>
</reference>
<proteinExistence type="inferred from homology"/>
<accession>A0PM66</accession>
<keyword id="KW-0687">Ribonucleoprotein</keyword>
<keyword id="KW-0689">Ribosomal protein</keyword>
<keyword id="KW-0694">RNA-binding</keyword>
<keyword id="KW-0699">rRNA-binding</keyword>
<evidence type="ECO:0000255" key="1">
    <source>
        <dbReference type="HAMAP-Rule" id="MF_01320"/>
    </source>
</evidence>
<evidence type="ECO:0000256" key="2">
    <source>
        <dbReference type="SAM" id="MobiDB-lite"/>
    </source>
</evidence>
<evidence type="ECO:0000305" key="3"/>
<name>RL2_MYCUA</name>
<sequence length="280" mass="30359">MAIRKYKPTTPGRRGASVSDFAEITRSTPEKSLVRPLHGHGGRNAHGRITTRHKGGGHKRAYRVIDFGRNDKDGVNAKVAHIEYDPNRTARIALLHYLDGEKRYIIAPNGLSQGDVVESGANADIKPGNNLPLRNIPAGTLVHAVELRPGGGAKLARSAGSSIQLLGKEASYASLRMPSGEIRRVDVRCRATVGEVGNAEQANINWGKAGRMRWKGKRPSVRGVVMNPVDHPHGGGEGKTSGGRHPVSPWGKPEGRTRNPNKASNKLIVRRRRTGKKHGR</sequence>
<feature type="chain" id="PRO_0000309963" description="Large ribosomal subunit protein uL2">
    <location>
        <begin position="1"/>
        <end position="280"/>
    </location>
</feature>
<feature type="region of interest" description="Disordered" evidence="2">
    <location>
        <begin position="27"/>
        <end position="58"/>
    </location>
</feature>
<feature type="region of interest" description="Disordered" evidence="2">
    <location>
        <begin position="226"/>
        <end position="280"/>
    </location>
</feature>
<feature type="compositionally biased region" description="Basic residues" evidence="2">
    <location>
        <begin position="37"/>
        <end position="58"/>
    </location>
</feature>
<feature type="compositionally biased region" description="Basic residues" evidence="2">
    <location>
        <begin position="268"/>
        <end position="280"/>
    </location>
</feature>
<protein>
    <recommendedName>
        <fullName evidence="1">Large ribosomal subunit protein uL2</fullName>
    </recommendedName>
    <alternativeName>
        <fullName evidence="3">50S ribosomal protein L2</fullName>
    </alternativeName>
</protein>
<gene>
    <name evidence="1" type="primary">rplB</name>
    <name type="ordered locus">MUL_0793</name>
</gene>
<comment type="function">
    <text evidence="1">One of the primary rRNA binding proteins. Required for association of the 30S and 50S subunits to form the 70S ribosome, for tRNA binding and peptide bond formation. It has been suggested to have peptidyltransferase activity; this is somewhat controversial. Makes several contacts with the 16S rRNA in the 70S ribosome.</text>
</comment>
<comment type="subunit">
    <text evidence="1">Part of the 50S ribosomal subunit. Forms a bridge to the 30S subunit in the 70S ribosome.</text>
</comment>
<comment type="similarity">
    <text evidence="1">Belongs to the universal ribosomal protein uL2 family.</text>
</comment>